<proteinExistence type="inferred from homology"/>
<reference key="1">
    <citation type="submission" date="2008-05" db="EMBL/GenBank/DDBJ databases">
        <title>Complete sequence of Shigella boydii serotype 18 strain BS512.</title>
        <authorList>
            <person name="Rasko D.A."/>
            <person name="Rosovitz M."/>
            <person name="Maurelli A.T."/>
            <person name="Myers G."/>
            <person name="Seshadri R."/>
            <person name="Cer R."/>
            <person name="Jiang L."/>
            <person name="Ravel J."/>
            <person name="Sebastian Y."/>
        </authorList>
    </citation>
    <scope>NUCLEOTIDE SEQUENCE [LARGE SCALE GENOMIC DNA]</scope>
    <source>
        <strain>CDC 3083-94 / BS512</strain>
    </source>
</reference>
<organism>
    <name type="scientific">Shigella boydii serotype 18 (strain CDC 3083-94 / BS512)</name>
    <dbReference type="NCBI Taxonomy" id="344609"/>
    <lineage>
        <taxon>Bacteria</taxon>
        <taxon>Pseudomonadati</taxon>
        <taxon>Pseudomonadota</taxon>
        <taxon>Gammaproteobacteria</taxon>
        <taxon>Enterobacterales</taxon>
        <taxon>Enterobacteriaceae</taxon>
        <taxon>Shigella</taxon>
    </lineage>
</organism>
<protein>
    <recommendedName>
        <fullName evidence="1">Hydroxyacylglutathione hydrolase</fullName>
        <ecNumber evidence="1">3.1.2.6</ecNumber>
    </recommendedName>
    <alternativeName>
        <fullName evidence="1">Glyoxalase II</fullName>
        <shortName evidence="1">Glx II</shortName>
    </alternativeName>
</protein>
<dbReference type="EC" id="3.1.2.6" evidence="1"/>
<dbReference type="EMBL" id="CP001063">
    <property type="protein sequence ID" value="ACD07429.1"/>
    <property type="molecule type" value="Genomic_DNA"/>
</dbReference>
<dbReference type="RefSeq" id="WP_001052720.1">
    <property type="nucleotide sequence ID" value="NC_010658.1"/>
</dbReference>
<dbReference type="SMR" id="B2U350"/>
<dbReference type="STRING" id="344609.SbBS512_E0208"/>
<dbReference type="GeneID" id="93777211"/>
<dbReference type="KEGG" id="sbc:SbBS512_E0208"/>
<dbReference type="HOGENOM" id="CLU_030571_4_1_6"/>
<dbReference type="UniPathway" id="UPA00619">
    <property type="reaction ID" value="UER00676"/>
</dbReference>
<dbReference type="Proteomes" id="UP000001030">
    <property type="component" value="Chromosome"/>
</dbReference>
<dbReference type="GO" id="GO:0004416">
    <property type="term" value="F:hydroxyacylglutathione hydrolase activity"/>
    <property type="evidence" value="ECO:0007669"/>
    <property type="project" value="UniProtKB-UniRule"/>
</dbReference>
<dbReference type="GO" id="GO:0046872">
    <property type="term" value="F:metal ion binding"/>
    <property type="evidence" value="ECO:0007669"/>
    <property type="project" value="UniProtKB-KW"/>
</dbReference>
<dbReference type="GO" id="GO:0019243">
    <property type="term" value="P:methylglyoxal catabolic process to D-lactate via S-lactoyl-glutathione"/>
    <property type="evidence" value="ECO:0007669"/>
    <property type="project" value="InterPro"/>
</dbReference>
<dbReference type="CDD" id="cd07723">
    <property type="entry name" value="hydroxyacylglutathione_hydrolase_MBL-fold"/>
    <property type="match status" value="1"/>
</dbReference>
<dbReference type="FunFam" id="3.60.15.10:FF:000012">
    <property type="entry name" value="Hydroxyacylglutathione hydrolase"/>
    <property type="match status" value="1"/>
</dbReference>
<dbReference type="Gene3D" id="3.60.15.10">
    <property type="entry name" value="Ribonuclease Z/Hydroxyacylglutathione hydrolase-like"/>
    <property type="match status" value="1"/>
</dbReference>
<dbReference type="HAMAP" id="MF_01374">
    <property type="entry name" value="Glyoxalase_2"/>
    <property type="match status" value="1"/>
</dbReference>
<dbReference type="InterPro" id="IPR035680">
    <property type="entry name" value="Clx_II_MBL"/>
</dbReference>
<dbReference type="InterPro" id="IPR050110">
    <property type="entry name" value="Glyoxalase_II_hydrolase"/>
</dbReference>
<dbReference type="InterPro" id="IPR032282">
    <property type="entry name" value="HAGH_C"/>
</dbReference>
<dbReference type="InterPro" id="IPR017782">
    <property type="entry name" value="Hydroxyacylglutathione_Hdrlase"/>
</dbReference>
<dbReference type="InterPro" id="IPR001279">
    <property type="entry name" value="Metallo-B-lactamas"/>
</dbReference>
<dbReference type="InterPro" id="IPR036866">
    <property type="entry name" value="RibonucZ/Hydroxyglut_hydro"/>
</dbReference>
<dbReference type="NCBIfam" id="TIGR03413">
    <property type="entry name" value="GSH_gloB"/>
    <property type="match status" value="1"/>
</dbReference>
<dbReference type="NCBIfam" id="NF007597">
    <property type="entry name" value="PRK10241.1"/>
    <property type="match status" value="1"/>
</dbReference>
<dbReference type="PANTHER" id="PTHR43705">
    <property type="entry name" value="HYDROXYACYLGLUTATHIONE HYDROLASE"/>
    <property type="match status" value="1"/>
</dbReference>
<dbReference type="PANTHER" id="PTHR43705:SF1">
    <property type="entry name" value="HYDROXYACYLGLUTATHIONE HYDROLASE GLOB"/>
    <property type="match status" value="1"/>
</dbReference>
<dbReference type="Pfam" id="PF16123">
    <property type="entry name" value="HAGH_C"/>
    <property type="match status" value="1"/>
</dbReference>
<dbReference type="Pfam" id="PF00753">
    <property type="entry name" value="Lactamase_B"/>
    <property type="match status" value="1"/>
</dbReference>
<dbReference type="PIRSF" id="PIRSF005457">
    <property type="entry name" value="Glx"/>
    <property type="match status" value="1"/>
</dbReference>
<dbReference type="SMART" id="SM00849">
    <property type="entry name" value="Lactamase_B"/>
    <property type="match status" value="1"/>
</dbReference>
<dbReference type="SUPFAM" id="SSF56281">
    <property type="entry name" value="Metallo-hydrolase/oxidoreductase"/>
    <property type="match status" value="1"/>
</dbReference>
<evidence type="ECO:0000255" key="1">
    <source>
        <dbReference type="HAMAP-Rule" id="MF_01374"/>
    </source>
</evidence>
<keyword id="KW-0378">Hydrolase</keyword>
<keyword id="KW-0479">Metal-binding</keyword>
<keyword id="KW-1185">Reference proteome</keyword>
<keyword id="KW-0862">Zinc</keyword>
<comment type="function">
    <text evidence="1">Thiolesterase that catalyzes the hydrolysis of S-D-lactoyl-glutathione to form glutathione and D-lactic acid.</text>
</comment>
<comment type="catalytic activity">
    <reaction evidence="1">
        <text>an S-(2-hydroxyacyl)glutathione + H2O = a 2-hydroxy carboxylate + glutathione + H(+)</text>
        <dbReference type="Rhea" id="RHEA:21864"/>
        <dbReference type="ChEBI" id="CHEBI:15377"/>
        <dbReference type="ChEBI" id="CHEBI:15378"/>
        <dbReference type="ChEBI" id="CHEBI:57925"/>
        <dbReference type="ChEBI" id="CHEBI:58896"/>
        <dbReference type="ChEBI" id="CHEBI:71261"/>
        <dbReference type="EC" id="3.1.2.6"/>
    </reaction>
</comment>
<comment type="cofactor">
    <cofactor evidence="1">
        <name>Zn(2+)</name>
        <dbReference type="ChEBI" id="CHEBI:29105"/>
    </cofactor>
    <text evidence="1">Binds 2 Zn(2+) ions per subunit.</text>
</comment>
<comment type="pathway">
    <text evidence="1">Secondary metabolite metabolism; methylglyoxal degradation; (R)-lactate from methylglyoxal: step 2/2.</text>
</comment>
<comment type="subunit">
    <text evidence="1">Monomer.</text>
</comment>
<comment type="similarity">
    <text evidence="1">Belongs to the metallo-beta-lactamase superfamily. Glyoxalase II family.</text>
</comment>
<feature type="chain" id="PRO_1000144814" description="Hydroxyacylglutathione hydrolase">
    <location>
        <begin position="1"/>
        <end position="251"/>
    </location>
</feature>
<feature type="binding site" evidence="1">
    <location>
        <position position="53"/>
    </location>
    <ligand>
        <name>Zn(2+)</name>
        <dbReference type="ChEBI" id="CHEBI:29105"/>
        <label>1</label>
    </ligand>
</feature>
<feature type="binding site" evidence="1">
    <location>
        <position position="55"/>
    </location>
    <ligand>
        <name>Zn(2+)</name>
        <dbReference type="ChEBI" id="CHEBI:29105"/>
        <label>1</label>
    </ligand>
</feature>
<feature type="binding site" evidence="1">
    <location>
        <position position="57"/>
    </location>
    <ligand>
        <name>Zn(2+)</name>
        <dbReference type="ChEBI" id="CHEBI:29105"/>
        <label>2</label>
    </ligand>
</feature>
<feature type="binding site" evidence="1">
    <location>
        <position position="58"/>
    </location>
    <ligand>
        <name>Zn(2+)</name>
        <dbReference type="ChEBI" id="CHEBI:29105"/>
        <label>2</label>
    </ligand>
</feature>
<feature type="binding site" evidence="1">
    <location>
        <position position="110"/>
    </location>
    <ligand>
        <name>Zn(2+)</name>
        <dbReference type="ChEBI" id="CHEBI:29105"/>
        <label>1</label>
    </ligand>
</feature>
<feature type="binding site" evidence="1">
    <location>
        <position position="127"/>
    </location>
    <ligand>
        <name>Zn(2+)</name>
        <dbReference type="ChEBI" id="CHEBI:29105"/>
        <label>1</label>
    </ligand>
</feature>
<feature type="binding site" evidence="1">
    <location>
        <position position="127"/>
    </location>
    <ligand>
        <name>Zn(2+)</name>
        <dbReference type="ChEBI" id="CHEBI:29105"/>
        <label>2</label>
    </ligand>
</feature>
<feature type="binding site" evidence="1">
    <location>
        <position position="165"/>
    </location>
    <ligand>
        <name>Zn(2+)</name>
        <dbReference type="ChEBI" id="CHEBI:29105"/>
        <label>2</label>
    </ligand>
</feature>
<gene>
    <name evidence="1" type="primary">gloB</name>
    <name type="ordered locus">SbBS512_E0208</name>
</gene>
<accession>B2U350</accession>
<name>GLO2_SHIB3</name>
<sequence length="251" mass="28420">MNLNSIPAFDDNYIWVLNDEAGRCLIVDPGDAEPVLNAIAANNWQPEAIFLTHHHHDHVGGVKELVEKFPQIVVYGPQETQDKGTTQVVKDGETAFVLGHEFSVIATPGHTLGHICYFSKPYLFCGDTLFSGGCGRLFEGTASQMYQSLNKLSALPDDTLVCCAHEYTLSNMKFALSILPHDLSINDYYRKVKELRAKNQITLPVILKNERQINVFLRTEDIDLINVINEETLLQQPEERFAWLRSKKDRF</sequence>